<name>EXD1_HUMAN</name>
<evidence type="ECO:0000250" key="1">
    <source>
        <dbReference type="UniProtKB" id="H9IUR0"/>
    </source>
</evidence>
<evidence type="ECO:0000250" key="2">
    <source>
        <dbReference type="UniProtKB" id="Q8CDF7"/>
    </source>
</evidence>
<evidence type="ECO:0000255" key="3"/>
<evidence type="ECO:0000256" key="4">
    <source>
        <dbReference type="SAM" id="MobiDB-lite"/>
    </source>
</evidence>
<evidence type="ECO:0000269" key="5">
    <source>
    </source>
</evidence>
<evidence type="ECO:0000303" key="6">
    <source>
    </source>
</evidence>
<evidence type="ECO:0000305" key="7"/>
<evidence type="ECO:0000312" key="8">
    <source>
        <dbReference type="HGNC" id="HGNC:28507"/>
    </source>
</evidence>
<proteinExistence type="evidence at protein level"/>
<keyword id="KW-0025">Alternative splicing</keyword>
<keyword id="KW-0963">Cytoplasm</keyword>
<keyword id="KW-0469">Meiosis</keyword>
<keyword id="KW-1267">Proteomics identification</keyword>
<keyword id="KW-1185">Reference proteome</keyword>
<keyword id="KW-0694">RNA-binding</keyword>
<keyword id="KW-0943">RNA-mediated gene silencing</keyword>
<reference key="1">
    <citation type="journal article" date="2004" name="Nat. Genet.">
        <title>Complete sequencing and characterization of 21,243 full-length human cDNAs.</title>
        <authorList>
            <person name="Ota T."/>
            <person name="Suzuki Y."/>
            <person name="Nishikawa T."/>
            <person name="Otsuki T."/>
            <person name="Sugiyama T."/>
            <person name="Irie R."/>
            <person name="Wakamatsu A."/>
            <person name="Hayashi K."/>
            <person name="Sato H."/>
            <person name="Nagai K."/>
            <person name="Kimura K."/>
            <person name="Makita H."/>
            <person name="Sekine M."/>
            <person name="Obayashi M."/>
            <person name="Nishi T."/>
            <person name="Shibahara T."/>
            <person name="Tanaka T."/>
            <person name="Ishii S."/>
            <person name="Yamamoto J."/>
            <person name="Saito K."/>
            <person name="Kawai Y."/>
            <person name="Isono Y."/>
            <person name="Nakamura Y."/>
            <person name="Nagahari K."/>
            <person name="Murakami K."/>
            <person name="Yasuda T."/>
            <person name="Iwayanagi T."/>
            <person name="Wagatsuma M."/>
            <person name="Shiratori A."/>
            <person name="Sudo H."/>
            <person name="Hosoiri T."/>
            <person name="Kaku Y."/>
            <person name="Kodaira H."/>
            <person name="Kondo H."/>
            <person name="Sugawara M."/>
            <person name="Takahashi M."/>
            <person name="Kanda K."/>
            <person name="Yokoi T."/>
            <person name="Furuya T."/>
            <person name="Kikkawa E."/>
            <person name="Omura Y."/>
            <person name="Abe K."/>
            <person name="Kamihara K."/>
            <person name="Katsuta N."/>
            <person name="Sato K."/>
            <person name="Tanikawa M."/>
            <person name="Yamazaki M."/>
            <person name="Ninomiya K."/>
            <person name="Ishibashi T."/>
            <person name="Yamashita H."/>
            <person name="Murakawa K."/>
            <person name="Fujimori K."/>
            <person name="Tanai H."/>
            <person name="Kimata M."/>
            <person name="Watanabe M."/>
            <person name="Hiraoka S."/>
            <person name="Chiba Y."/>
            <person name="Ishida S."/>
            <person name="Ono Y."/>
            <person name="Takiguchi S."/>
            <person name="Watanabe S."/>
            <person name="Yosida M."/>
            <person name="Hotuta T."/>
            <person name="Kusano J."/>
            <person name="Kanehori K."/>
            <person name="Takahashi-Fujii A."/>
            <person name="Hara H."/>
            <person name="Tanase T.-O."/>
            <person name="Nomura Y."/>
            <person name="Togiya S."/>
            <person name="Komai F."/>
            <person name="Hara R."/>
            <person name="Takeuchi K."/>
            <person name="Arita M."/>
            <person name="Imose N."/>
            <person name="Musashino K."/>
            <person name="Yuuki H."/>
            <person name="Oshima A."/>
            <person name="Sasaki N."/>
            <person name="Aotsuka S."/>
            <person name="Yoshikawa Y."/>
            <person name="Matsunawa H."/>
            <person name="Ichihara T."/>
            <person name="Shiohata N."/>
            <person name="Sano S."/>
            <person name="Moriya S."/>
            <person name="Momiyama H."/>
            <person name="Satoh N."/>
            <person name="Takami S."/>
            <person name="Terashima Y."/>
            <person name="Suzuki O."/>
            <person name="Nakagawa S."/>
            <person name="Senoh A."/>
            <person name="Mizoguchi H."/>
            <person name="Goto Y."/>
            <person name="Shimizu F."/>
            <person name="Wakebe H."/>
            <person name="Hishigaki H."/>
            <person name="Watanabe T."/>
            <person name="Sugiyama A."/>
            <person name="Takemoto M."/>
            <person name="Kawakami B."/>
            <person name="Yamazaki M."/>
            <person name="Watanabe K."/>
            <person name="Kumagai A."/>
            <person name="Itakura S."/>
            <person name="Fukuzumi Y."/>
            <person name="Fujimori Y."/>
            <person name="Komiyama M."/>
            <person name="Tashiro H."/>
            <person name="Tanigami A."/>
            <person name="Fujiwara T."/>
            <person name="Ono T."/>
            <person name="Yamada K."/>
            <person name="Fujii Y."/>
            <person name="Ozaki K."/>
            <person name="Hirao M."/>
            <person name="Ohmori Y."/>
            <person name="Kawabata A."/>
            <person name="Hikiji T."/>
            <person name="Kobatake N."/>
            <person name="Inagaki H."/>
            <person name="Ikema Y."/>
            <person name="Okamoto S."/>
            <person name="Okitani R."/>
            <person name="Kawakami T."/>
            <person name="Noguchi S."/>
            <person name="Itoh T."/>
            <person name="Shigeta K."/>
            <person name="Senba T."/>
            <person name="Matsumura K."/>
            <person name="Nakajima Y."/>
            <person name="Mizuno T."/>
            <person name="Morinaga M."/>
            <person name="Sasaki M."/>
            <person name="Togashi T."/>
            <person name="Oyama M."/>
            <person name="Hata H."/>
            <person name="Watanabe M."/>
            <person name="Komatsu T."/>
            <person name="Mizushima-Sugano J."/>
            <person name="Satoh T."/>
            <person name="Shirai Y."/>
            <person name="Takahashi Y."/>
            <person name="Nakagawa K."/>
            <person name="Okumura K."/>
            <person name="Nagase T."/>
            <person name="Nomura N."/>
            <person name="Kikuchi H."/>
            <person name="Masuho Y."/>
            <person name="Yamashita R."/>
            <person name="Nakai K."/>
            <person name="Yada T."/>
            <person name="Nakamura Y."/>
            <person name="Ohara O."/>
            <person name="Isogai T."/>
            <person name="Sugano S."/>
        </authorList>
    </citation>
    <scope>NUCLEOTIDE SEQUENCE [LARGE SCALE MRNA] (ISOFORMS 1; 2 AND 3)</scope>
    <scope>VARIANT ALA-489</scope>
    <source>
        <tissue>Hippocampus</tissue>
        <tissue>Testis</tissue>
    </source>
</reference>
<reference key="2">
    <citation type="journal article" date="2006" name="Nature">
        <title>Analysis of the DNA sequence and duplication history of human chromosome 15.</title>
        <authorList>
            <person name="Zody M.C."/>
            <person name="Garber M."/>
            <person name="Sharpe T."/>
            <person name="Young S.K."/>
            <person name="Rowen L."/>
            <person name="O'Neill K."/>
            <person name="Whittaker C.A."/>
            <person name="Kamal M."/>
            <person name="Chang J.L."/>
            <person name="Cuomo C.A."/>
            <person name="Dewar K."/>
            <person name="FitzGerald M.G."/>
            <person name="Kodira C.D."/>
            <person name="Madan A."/>
            <person name="Qin S."/>
            <person name="Yang X."/>
            <person name="Abbasi N."/>
            <person name="Abouelleil A."/>
            <person name="Arachchi H.M."/>
            <person name="Baradarani L."/>
            <person name="Birditt B."/>
            <person name="Bloom S."/>
            <person name="Bloom T."/>
            <person name="Borowsky M.L."/>
            <person name="Burke J."/>
            <person name="Butler J."/>
            <person name="Cook A."/>
            <person name="DeArellano K."/>
            <person name="DeCaprio D."/>
            <person name="Dorris L. III"/>
            <person name="Dors M."/>
            <person name="Eichler E.E."/>
            <person name="Engels R."/>
            <person name="Fahey J."/>
            <person name="Fleetwood P."/>
            <person name="Friedman C."/>
            <person name="Gearin G."/>
            <person name="Hall J.L."/>
            <person name="Hensley G."/>
            <person name="Johnson E."/>
            <person name="Jones C."/>
            <person name="Kamat A."/>
            <person name="Kaur A."/>
            <person name="Locke D.P."/>
            <person name="Madan A."/>
            <person name="Munson G."/>
            <person name="Jaffe D.B."/>
            <person name="Lui A."/>
            <person name="Macdonald P."/>
            <person name="Mauceli E."/>
            <person name="Naylor J.W."/>
            <person name="Nesbitt R."/>
            <person name="Nicol R."/>
            <person name="O'Leary S.B."/>
            <person name="Ratcliffe A."/>
            <person name="Rounsley S."/>
            <person name="She X."/>
            <person name="Sneddon K.M.B."/>
            <person name="Stewart S."/>
            <person name="Sougnez C."/>
            <person name="Stone S.M."/>
            <person name="Topham K."/>
            <person name="Vincent D."/>
            <person name="Wang S."/>
            <person name="Zimmer A.R."/>
            <person name="Birren B.W."/>
            <person name="Hood L."/>
            <person name="Lander E.S."/>
            <person name="Nusbaum C."/>
        </authorList>
    </citation>
    <scope>NUCLEOTIDE SEQUENCE [LARGE SCALE GENOMIC DNA]</scope>
</reference>
<reference key="3">
    <citation type="journal article" date="2004" name="Genome Res.">
        <title>The status, quality, and expansion of the NIH full-length cDNA project: the Mammalian Gene Collection (MGC).</title>
        <authorList>
            <consortium name="The MGC Project Team"/>
        </authorList>
    </citation>
    <scope>NUCLEOTIDE SEQUENCE [LARGE SCALE MRNA] (ISOFORM 1)</scope>
    <source>
        <tissue>Testis</tissue>
    </source>
</reference>
<protein>
    <recommendedName>
        <fullName evidence="7">piRNA biogenesis protein EXD1</fullName>
    </recommendedName>
    <alternativeName>
        <fullName evidence="8">Exonuclease 3'-5' domain-containing protein 1</fullName>
    </alternativeName>
    <alternativeName>
        <fullName evidence="8">Exonuclease 3'-5' domain-like-containing protein 1</fullName>
    </alternativeName>
    <alternativeName>
        <fullName evidence="7">Inactive exonuclease EXD1</fullName>
    </alternativeName>
</protein>
<accession>Q8NHP7</accession>
<accession>A8K909</accession>
<accession>B7Z839</accession>
<accession>Q6ZW94</accession>
<feature type="chain" id="PRO_0000337244" description="piRNA biogenesis protein EXD1">
    <location>
        <begin position="1"/>
        <end position="514"/>
    </location>
</feature>
<feature type="domain" description="3'-5' exonuclease" evidence="3">
    <location>
        <begin position="30"/>
        <end position="122"/>
    </location>
</feature>
<feature type="region of interest" description="Disordered" evidence="4">
    <location>
        <begin position="384"/>
        <end position="422"/>
    </location>
</feature>
<feature type="splice variant" id="VSP_033987" description="In isoform 2." evidence="6">
    <original>MEDSEFLAYVELLDEVEQGSVRAKASSVSLHAERTWMEKMKVEDLNVCEPASPAPEAPATSLLNDLKYSPSEEEEVTYTVINQFQQKFGAAILHIKKQNVLSVAAEGANVCRHGKLCWLQVATNCRVYLFDIFLLGSRAFHNGLQMILEDKRILKVIHDCRWLSDCLSHQYGILLNNVFDTQVADVLQFSMETGGYLPNCITTLQESLIKHLQVAPKYLSFLEKRQKLI</original>
    <variation>MSHCAQPKTVIFFKVLLTVQRKLFYCL</variation>
    <location>
        <begin position="1"/>
        <end position="229"/>
    </location>
</feature>
<feature type="splice variant" id="VSP_054898" description="In isoform 3." evidence="6">
    <original>MEDSEFLAY</original>
    <variation>MDPSSDYHFLSQILWKRVKLTLVCGVFEGVLQHVDPNKIVVLKKVKNVETGRSVPGVKLFFGHEIVN</variation>
    <location>
        <begin position="1"/>
        <end position="9"/>
    </location>
</feature>
<feature type="sequence variant" id="VAR_043676" description="In dbSNP:rs522063." evidence="5">
    <original>T</original>
    <variation>A</variation>
    <location>
        <position position="489"/>
    </location>
</feature>
<feature type="sequence conflict" description="In Ref. 1; BAF85213." evidence="7" ref="1">
    <original>A</original>
    <variation>T</variation>
    <location>
        <position position="32"/>
    </location>
</feature>
<comment type="function">
    <text evidence="1 2">RNA-binding component of the PET complex, a multiprotein complex required for the processing of piRNAs during spermatogenesis. The piRNA metabolic process mediates the repression of transposable elements during meiosis by forming complexes composed of piRNAs and Piwi proteins and governs the methylation and subsequent repression of transposable elements, preventing their mobilization, which is essential for the germline integrity (By similarity). The PET complex is required during the secondary piRNAs metabolic process for the PIWIL2 slicing-triggered loading of PIWIL4 piRNAs. In the PET complex, EXD1 probably acts as an RNA adapter. EXD1 is an inactive exonuclease (By similarity).</text>
</comment>
<comment type="subunit">
    <text evidence="1 2">Homodimer (By similarity). Component of the PET complex, at least composed of EXD1, PIWIL2, TDRD12 and piRNAs (By similarity).</text>
</comment>
<comment type="interaction">
    <interactant intactId="EBI-10192266">
        <id>Q8NHP7</id>
    </interactant>
    <interactant intactId="EBI-12112376">
        <id>A0A0C4DGQ7</id>
        <label>EML2</label>
    </interactant>
    <organismsDiffer>false</organismsDiffer>
    <experiments>3</experiments>
</comment>
<comment type="interaction">
    <interactant intactId="EBI-10192266">
        <id>Q8NHP7</id>
    </interactant>
    <interactant intactId="EBI-1054588">
        <id>O95834</id>
        <label>EML2</label>
    </interactant>
    <organismsDiffer>false</organismsDiffer>
    <experiments>3</experiments>
</comment>
<comment type="subcellular location">
    <subcellularLocation>
        <location evidence="1">Cytoplasm</location>
    </subcellularLocation>
    <text evidence="1">Component of the meiotic nuage, also named P granule, a germ-cell-specific organelle required to repress transposon activity during meiosis.</text>
</comment>
<comment type="alternative products">
    <event type="alternative splicing"/>
    <isoform>
        <id>Q8NHP7-1</id>
        <name>1</name>
        <sequence type="displayed"/>
    </isoform>
    <isoform>
        <id>Q8NHP7-2</id>
        <name>2</name>
        <sequence type="described" ref="VSP_033987"/>
    </isoform>
    <isoform>
        <id>Q8NHP7-3</id>
        <name>3</name>
        <sequence type="described" ref="VSP_054898"/>
    </isoform>
</comment>
<comment type="domain">
    <text evidence="2">The 3'-5' exonuclease domain lacks the conserved Asp-Glu-Asp-Asp (DEDD) residues that coordinates divalent ions essential for exonuclease activity.</text>
</comment>
<comment type="similarity">
    <text evidence="7">Belongs to the EXD1 family.</text>
</comment>
<gene>
    <name type="primary">EXD1</name>
    <name type="synonym">EXDL1</name>
</gene>
<dbReference type="EMBL" id="AK123414">
    <property type="protein sequence ID" value="BAC85610.1"/>
    <property type="molecule type" value="mRNA"/>
</dbReference>
<dbReference type="EMBL" id="AK292524">
    <property type="protein sequence ID" value="BAF85213.1"/>
    <property type="molecule type" value="mRNA"/>
</dbReference>
<dbReference type="EMBL" id="AK302864">
    <property type="protein sequence ID" value="BAH13825.1"/>
    <property type="molecule type" value="mRNA"/>
</dbReference>
<dbReference type="EMBL" id="AC012652">
    <property type="status" value="NOT_ANNOTATED_CDS"/>
    <property type="molecule type" value="Genomic_DNA"/>
</dbReference>
<dbReference type="EMBL" id="AC022408">
    <property type="status" value="NOT_ANNOTATED_CDS"/>
    <property type="molecule type" value="Genomic_DNA"/>
</dbReference>
<dbReference type="EMBL" id="BC030628">
    <property type="protein sequence ID" value="AAH30628.2"/>
    <property type="molecule type" value="mRNA"/>
</dbReference>
<dbReference type="CCDS" id="CCDS10072.1">
    <molecule id="Q8NHP7-1"/>
</dbReference>
<dbReference type="CCDS" id="CCDS66738.1">
    <molecule id="Q8NHP7-3"/>
</dbReference>
<dbReference type="RefSeq" id="NP_001273370.1">
    <molecule id="Q8NHP7-3"/>
    <property type="nucleotide sequence ID" value="NM_001286441.2"/>
</dbReference>
<dbReference type="RefSeq" id="NP_689809.2">
    <molecule id="Q8NHP7-1"/>
    <property type="nucleotide sequence ID" value="NM_152596.3"/>
</dbReference>
<dbReference type="RefSeq" id="XP_011519600.1">
    <molecule id="Q8NHP7-3"/>
    <property type="nucleotide sequence ID" value="XM_011521298.3"/>
</dbReference>
<dbReference type="RefSeq" id="XP_047288166.1">
    <molecule id="Q8NHP7-1"/>
    <property type="nucleotide sequence ID" value="XM_047432210.1"/>
</dbReference>
<dbReference type="SMR" id="Q8NHP7"/>
<dbReference type="BioGRID" id="127804">
    <property type="interactions" value="6"/>
</dbReference>
<dbReference type="FunCoup" id="Q8NHP7">
    <property type="interactions" value="11"/>
</dbReference>
<dbReference type="IntAct" id="Q8NHP7">
    <property type="interactions" value="3"/>
</dbReference>
<dbReference type="STRING" id="9606.ENSP00000415056"/>
<dbReference type="iPTMnet" id="Q8NHP7"/>
<dbReference type="PhosphoSitePlus" id="Q8NHP7"/>
<dbReference type="BioMuta" id="EXD1"/>
<dbReference type="DMDM" id="317373564"/>
<dbReference type="jPOST" id="Q8NHP7"/>
<dbReference type="MassIVE" id="Q8NHP7"/>
<dbReference type="PaxDb" id="9606-ENSP00000415056"/>
<dbReference type="PeptideAtlas" id="Q8NHP7"/>
<dbReference type="ProteomicsDB" id="6921"/>
<dbReference type="ProteomicsDB" id="73731">
    <molecule id="Q8NHP7-1"/>
</dbReference>
<dbReference type="ProteomicsDB" id="73732">
    <molecule id="Q8NHP7-2"/>
</dbReference>
<dbReference type="Antibodypedia" id="23259">
    <property type="antibodies" value="163 antibodies from 15 providers"/>
</dbReference>
<dbReference type="DNASU" id="161829"/>
<dbReference type="Ensembl" id="ENST00000314992.9">
    <molecule id="Q8NHP7-1"/>
    <property type="protein sequence ID" value="ENSP00000321029.5"/>
    <property type="gene ID" value="ENSG00000178997.12"/>
</dbReference>
<dbReference type="Ensembl" id="ENST00000458580.7">
    <molecule id="Q8NHP7-3"/>
    <property type="protein sequence ID" value="ENSP00000415056.2"/>
    <property type="gene ID" value="ENSG00000178997.12"/>
</dbReference>
<dbReference type="GeneID" id="161829"/>
<dbReference type="KEGG" id="hsa:161829"/>
<dbReference type="MANE-Select" id="ENST00000458580.7">
    <molecule id="Q8NHP7-3"/>
    <property type="protein sequence ID" value="ENSP00000415056.2"/>
    <property type="RefSeq nucleotide sequence ID" value="NM_001286441.2"/>
    <property type="RefSeq protein sequence ID" value="NP_001273370.1"/>
</dbReference>
<dbReference type="UCSC" id="uc001znk.5">
    <molecule id="Q8NHP7-1"/>
    <property type="organism name" value="human"/>
</dbReference>
<dbReference type="AGR" id="HGNC:28507"/>
<dbReference type="CTD" id="161829"/>
<dbReference type="DisGeNET" id="161829"/>
<dbReference type="GeneCards" id="EXD1"/>
<dbReference type="HGNC" id="HGNC:28507">
    <property type="gene designation" value="EXD1"/>
</dbReference>
<dbReference type="HPA" id="ENSG00000178997">
    <property type="expression patterns" value="Tissue enriched (testis)"/>
</dbReference>
<dbReference type="neXtProt" id="NX_Q8NHP7"/>
<dbReference type="OpenTargets" id="ENSG00000178997"/>
<dbReference type="PharmGKB" id="PA164719420"/>
<dbReference type="VEuPathDB" id="HostDB:ENSG00000178997"/>
<dbReference type="eggNOG" id="KOG2405">
    <property type="taxonomic scope" value="Eukaryota"/>
</dbReference>
<dbReference type="GeneTree" id="ENSGT00390000003581"/>
<dbReference type="HOGENOM" id="CLU_034376_1_0_1"/>
<dbReference type="InParanoid" id="Q8NHP7"/>
<dbReference type="OMA" id="GMEPTCM"/>
<dbReference type="OrthoDB" id="26838at2759"/>
<dbReference type="PAN-GO" id="Q8NHP7">
    <property type="GO annotations" value="3 GO annotations based on evolutionary models"/>
</dbReference>
<dbReference type="PhylomeDB" id="Q8NHP7"/>
<dbReference type="TreeFam" id="TF315023"/>
<dbReference type="PathwayCommons" id="Q8NHP7"/>
<dbReference type="SignaLink" id="Q8NHP7"/>
<dbReference type="BioGRID-ORCS" id="161829">
    <property type="hits" value="11 hits in 1153 CRISPR screens"/>
</dbReference>
<dbReference type="ChiTaRS" id="EXD1">
    <property type="organism name" value="human"/>
</dbReference>
<dbReference type="GenomeRNAi" id="161829"/>
<dbReference type="Pharos" id="Q8NHP7">
    <property type="development level" value="Tdark"/>
</dbReference>
<dbReference type="PRO" id="PR:Q8NHP7"/>
<dbReference type="Proteomes" id="UP000005640">
    <property type="component" value="Chromosome 15"/>
</dbReference>
<dbReference type="RNAct" id="Q8NHP7">
    <property type="molecule type" value="protein"/>
</dbReference>
<dbReference type="Bgee" id="ENSG00000178997">
    <property type="expression patterns" value="Expressed in right testis and 61 other cell types or tissues"/>
</dbReference>
<dbReference type="ExpressionAtlas" id="Q8NHP7">
    <property type="expression patterns" value="baseline and differential"/>
</dbReference>
<dbReference type="GO" id="GO:0043186">
    <property type="term" value="C:P granule"/>
    <property type="evidence" value="ECO:0000250"/>
    <property type="project" value="UniProtKB"/>
</dbReference>
<dbReference type="GO" id="GO:1990923">
    <property type="term" value="C:PET complex"/>
    <property type="evidence" value="ECO:0000250"/>
    <property type="project" value="UniProtKB"/>
</dbReference>
<dbReference type="GO" id="GO:0042803">
    <property type="term" value="F:protein homodimerization activity"/>
    <property type="evidence" value="ECO:0000250"/>
    <property type="project" value="UniProtKB"/>
</dbReference>
<dbReference type="GO" id="GO:0003723">
    <property type="term" value="F:RNA binding"/>
    <property type="evidence" value="ECO:0000250"/>
    <property type="project" value="UniProtKB"/>
</dbReference>
<dbReference type="GO" id="GO:0051321">
    <property type="term" value="P:meiotic cell cycle"/>
    <property type="evidence" value="ECO:0007669"/>
    <property type="project" value="UniProtKB-KW"/>
</dbReference>
<dbReference type="GO" id="GO:0034587">
    <property type="term" value="P:piRNA processing"/>
    <property type="evidence" value="ECO:0000250"/>
    <property type="project" value="UniProtKB"/>
</dbReference>
<dbReference type="GO" id="GO:0031047">
    <property type="term" value="P:regulatory ncRNA-mediated gene silencing"/>
    <property type="evidence" value="ECO:0000250"/>
    <property type="project" value="UniProtKB"/>
</dbReference>
<dbReference type="CDD" id="cd06148">
    <property type="entry name" value="Egl_like_exo"/>
    <property type="match status" value="1"/>
</dbReference>
<dbReference type="FunFam" id="3.30.420.10:FF:000103">
    <property type="entry name" value="piRNA biogenesis protein EXD1"/>
    <property type="match status" value="1"/>
</dbReference>
<dbReference type="Gene3D" id="3.30.420.10">
    <property type="entry name" value="Ribonuclease H-like superfamily/Ribonuclease H"/>
    <property type="match status" value="1"/>
</dbReference>
<dbReference type="InterPro" id="IPR002562">
    <property type="entry name" value="3'-5'_exonuclease_dom"/>
</dbReference>
<dbReference type="InterPro" id="IPR052144">
    <property type="entry name" value="piRNA_biogenesis_EXD1"/>
</dbReference>
<dbReference type="InterPro" id="IPR012337">
    <property type="entry name" value="RNaseH-like_sf"/>
</dbReference>
<dbReference type="InterPro" id="IPR036397">
    <property type="entry name" value="RNaseH_sf"/>
</dbReference>
<dbReference type="PANTHER" id="PTHR46628">
    <property type="entry name" value="PIRNA BIOGENESIS PROTEIN EXD1"/>
    <property type="match status" value="1"/>
</dbReference>
<dbReference type="PANTHER" id="PTHR46628:SF1">
    <property type="entry name" value="PIRNA BIOGENESIS PROTEIN EXD1"/>
    <property type="match status" value="1"/>
</dbReference>
<dbReference type="Pfam" id="PF01612">
    <property type="entry name" value="DNA_pol_A_exo1"/>
    <property type="match status" value="1"/>
</dbReference>
<dbReference type="SMART" id="SM00474">
    <property type="entry name" value="35EXOc"/>
    <property type="match status" value="1"/>
</dbReference>
<dbReference type="SUPFAM" id="SSF53098">
    <property type="entry name" value="Ribonuclease H-like"/>
    <property type="match status" value="1"/>
</dbReference>
<organism>
    <name type="scientific">Homo sapiens</name>
    <name type="common">Human</name>
    <dbReference type="NCBI Taxonomy" id="9606"/>
    <lineage>
        <taxon>Eukaryota</taxon>
        <taxon>Metazoa</taxon>
        <taxon>Chordata</taxon>
        <taxon>Craniata</taxon>
        <taxon>Vertebrata</taxon>
        <taxon>Euteleostomi</taxon>
        <taxon>Mammalia</taxon>
        <taxon>Eutheria</taxon>
        <taxon>Euarchontoglires</taxon>
        <taxon>Primates</taxon>
        <taxon>Haplorrhini</taxon>
        <taxon>Catarrhini</taxon>
        <taxon>Hominidae</taxon>
        <taxon>Homo</taxon>
    </lineage>
</organism>
<sequence length="514" mass="58335">MEDSEFLAYVELLDEVEQGSVRAKASSVSLHAERTWMEKMKVEDLNVCEPASPAPEAPATSLLNDLKYSPSEEEEVTYTVINQFQQKFGAAILHIKKQNVLSVAAEGANVCRHGKLCWLQVATNCRVYLFDIFLLGSRAFHNGLQMILEDKRILKVIHDCRWLSDCLSHQYGILLNNVFDTQVADVLQFSMETGGYLPNCITTLQESLIKHLQVAPKYLSFLEKRQKLIQENPEVWFIRPVSPSLLKILALEATYLLPLRLALLDEMMSDLTTLVDGYLNTYREGSADRLGGTEPTCMELPEELLQLKDFQKQRREKAAREYRVNAQGLLIRTVLQPKKLVTETAGKEEKVKGFLFGKNFRIDKAPSFTSQDFHGDVNLLKEESLNKQATNPQHLPPTEEGETSEDSSNKLICTKSKGSEDQRITQKEHFMTPKHEFQASLSLKEETEQLLMVENKEDLKCTKQAVSMSSFPQETRVSPSDTFYPIRKTVVSTLPPCPALEKIDSWISPFLNLP</sequence>